<reference key="1">
    <citation type="journal article" date="2000" name="Science">
        <title>Complete genome sequence of Neisseria meningitidis serogroup B strain MC58.</title>
        <authorList>
            <person name="Tettelin H."/>
            <person name="Saunders N.J."/>
            <person name="Heidelberg J.F."/>
            <person name="Jeffries A.C."/>
            <person name="Nelson K.E."/>
            <person name="Eisen J.A."/>
            <person name="Ketchum K.A."/>
            <person name="Hood D.W."/>
            <person name="Peden J.F."/>
            <person name="Dodson R.J."/>
            <person name="Nelson W.C."/>
            <person name="Gwinn M.L."/>
            <person name="DeBoy R.T."/>
            <person name="Peterson J.D."/>
            <person name="Hickey E.K."/>
            <person name="Haft D.H."/>
            <person name="Salzberg S.L."/>
            <person name="White O."/>
            <person name="Fleischmann R.D."/>
            <person name="Dougherty B.A."/>
            <person name="Mason T.M."/>
            <person name="Ciecko A."/>
            <person name="Parksey D.S."/>
            <person name="Blair E."/>
            <person name="Cittone H."/>
            <person name="Clark E.B."/>
            <person name="Cotton M.D."/>
            <person name="Utterback T.R."/>
            <person name="Khouri H.M."/>
            <person name="Qin H."/>
            <person name="Vamathevan J.J."/>
            <person name="Gill J."/>
            <person name="Scarlato V."/>
            <person name="Masignani V."/>
            <person name="Pizza M."/>
            <person name="Grandi G."/>
            <person name="Sun L."/>
            <person name="Smith H.O."/>
            <person name="Fraser C.M."/>
            <person name="Moxon E.R."/>
            <person name="Rappuoli R."/>
            <person name="Venter J.C."/>
        </authorList>
    </citation>
    <scope>NUCLEOTIDE SEQUENCE [LARGE SCALE GENOMIC DNA]</scope>
    <source>
        <strain>ATCC BAA-335 / MC58</strain>
    </source>
</reference>
<gene>
    <name evidence="2" type="primary">rplL</name>
    <name type="ordered locus">NMB0131</name>
</gene>
<sequence>MAITKEDILEAVGSLTVMELNDLVKAFEEKFGVSAAAVAVAGPAGAGAADAEEKTEFDVVLASAGDQKVGVIKVVRAITGLGLKEAKDIVDGAPKTIKEGVSKAEAEDIQKQLEEAGAKVEIK</sequence>
<feature type="initiator methionine" description="Removed" evidence="1">
    <location>
        <position position="1"/>
    </location>
</feature>
<feature type="chain" id="PRO_0000157557" description="Large ribosomal subunit protein bL12">
    <location>
        <begin position="2"/>
        <end position="123"/>
    </location>
</feature>
<evidence type="ECO:0000250" key="1"/>
<evidence type="ECO:0000255" key="2">
    <source>
        <dbReference type="HAMAP-Rule" id="MF_00368"/>
    </source>
</evidence>
<evidence type="ECO:0000305" key="3"/>
<protein>
    <recommendedName>
        <fullName evidence="2">Large ribosomal subunit protein bL12</fullName>
    </recommendedName>
    <alternativeName>
        <fullName evidence="3">50S ribosomal protein L7/L12</fullName>
    </alternativeName>
</protein>
<name>RL7_NEIMB</name>
<accession>P0A0X1</accession>
<accession>P80716</accession>
<dbReference type="EMBL" id="AE002098">
    <property type="protein sequence ID" value="AAF40590.1"/>
    <property type="molecule type" value="Genomic_DNA"/>
</dbReference>
<dbReference type="PIR" id="H81235">
    <property type="entry name" value="H81235"/>
</dbReference>
<dbReference type="RefSeq" id="NP_273189.1">
    <property type="nucleotide sequence ID" value="NC_003112.2"/>
</dbReference>
<dbReference type="RefSeq" id="WP_002215374.1">
    <property type="nucleotide sequence ID" value="NC_003112.2"/>
</dbReference>
<dbReference type="SMR" id="P0A0X1"/>
<dbReference type="FunCoup" id="P0A0X1">
    <property type="interactions" value="613"/>
</dbReference>
<dbReference type="STRING" id="122586.NMB0131"/>
<dbReference type="PaxDb" id="122586-NMB0131"/>
<dbReference type="GeneID" id="93387206"/>
<dbReference type="KEGG" id="nme:NMB0131"/>
<dbReference type="PATRIC" id="fig|122586.8.peg.170"/>
<dbReference type="HOGENOM" id="CLU_086499_3_2_4"/>
<dbReference type="InParanoid" id="P0A0X1"/>
<dbReference type="OrthoDB" id="9811748at2"/>
<dbReference type="Proteomes" id="UP000000425">
    <property type="component" value="Chromosome"/>
</dbReference>
<dbReference type="GO" id="GO:0022625">
    <property type="term" value="C:cytosolic large ribosomal subunit"/>
    <property type="evidence" value="ECO:0000318"/>
    <property type="project" value="GO_Central"/>
</dbReference>
<dbReference type="GO" id="GO:0003729">
    <property type="term" value="F:mRNA binding"/>
    <property type="evidence" value="ECO:0000318"/>
    <property type="project" value="GO_Central"/>
</dbReference>
<dbReference type="GO" id="GO:0003735">
    <property type="term" value="F:structural constituent of ribosome"/>
    <property type="evidence" value="ECO:0000318"/>
    <property type="project" value="GO_Central"/>
</dbReference>
<dbReference type="GO" id="GO:0006412">
    <property type="term" value="P:translation"/>
    <property type="evidence" value="ECO:0000318"/>
    <property type="project" value="GO_Central"/>
</dbReference>
<dbReference type="CDD" id="cd00387">
    <property type="entry name" value="Ribosomal_L7_L12"/>
    <property type="match status" value="1"/>
</dbReference>
<dbReference type="FunFam" id="1.20.5.710:FF:000003">
    <property type="entry name" value="50S ribosomal protein L7/L12"/>
    <property type="match status" value="1"/>
</dbReference>
<dbReference type="FunFam" id="3.30.1390.10:FF:000001">
    <property type="entry name" value="50S ribosomal protein L7/L12"/>
    <property type="match status" value="1"/>
</dbReference>
<dbReference type="Gene3D" id="3.30.1390.10">
    <property type="match status" value="1"/>
</dbReference>
<dbReference type="Gene3D" id="1.20.5.710">
    <property type="entry name" value="Single helix bin"/>
    <property type="match status" value="1"/>
</dbReference>
<dbReference type="HAMAP" id="MF_00368">
    <property type="entry name" value="Ribosomal_bL12"/>
    <property type="match status" value="1"/>
</dbReference>
<dbReference type="InterPro" id="IPR000206">
    <property type="entry name" value="Ribosomal_bL12"/>
</dbReference>
<dbReference type="InterPro" id="IPR013823">
    <property type="entry name" value="Ribosomal_bL12_C"/>
</dbReference>
<dbReference type="InterPro" id="IPR014719">
    <property type="entry name" value="Ribosomal_bL12_C/ClpS-like"/>
</dbReference>
<dbReference type="InterPro" id="IPR008932">
    <property type="entry name" value="Ribosomal_bL12_oligo"/>
</dbReference>
<dbReference type="InterPro" id="IPR036235">
    <property type="entry name" value="Ribosomal_bL12_oligo_N_sf"/>
</dbReference>
<dbReference type="NCBIfam" id="TIGR00855">
    <property type="entry name" value="L12"/>
    <property type="match status" value="1"/>
</dbReference>
<dbReference type="PANTHER" id="PTHR45987">
    <property type="entry name" value="39S RIBOSOMAL PROTEIN L12"/>
    <property type="match status" value="1"/>
</dbReference>
<dbReference type="PANTHER" id="PTHR45987:SF4">
    <property type="entry name" value="LARGE RIBOSOMAL SUBUNIT PROTEIN BL12M"/>
    <property type="match status" value="1"/>
</dbReference>
<dbReference type="Pfam" id="PF00542">
    <property type="entry name" value="Ribosomal_L12"/>
    <property type="match status" value="1"/>
</dbReference>
<dbReference type="Pfam" id="PF16320">
    <property type="entry name" value="Ribosomal_L12_N"/>
    <property type="match status" value="1"/>
</dbReference>
<dbReference type="SUPFAM" id="SSF54736">
    <property type="entry name" value="ClpS-like"/>
    <property type="match status" value="1"/>
</dbReference>
<dbReference type="SUPFAM" id="SSF48300">
    <property type="entry name" value="Ribosomal protein L7/12, oligomerisation (N-terminal) domain"/>
    <property type="match status" value="1"/>
</dbReference>
<comment type="function">
    <text evidence="2">Forms part of the ribosomal stalk which helps the ribosome interact with GTP-bound translation factors. Is thus essential for accurate translation.</text>
</comment>
<comment type="subunit">
    <text evidence="2">Homodimer. Part of the ribosomal stalk of the 50S ribosomal subunit. Forms a multimeric L10(L12)X complex, where L10 forms an elongated spine to which 2 to 4 L12 dimers bind in a sequential fashion. Binds GTP-bound translation factors.</text>
</comment>
<comment type="similarity">
    <text evidence="2">Belongs to the bacterial ribosomal protein bL12 family.</text>
</comment>
<keyword id="KW-1185">Reference proteome</keyword>
<keyword id="KW-0687">Ribonucleoprotein</keyword>
<keyword id="KW-0689">Ribosomal protein</keyword>
<proteinExistence type="inferred from homology"/>
<organism>
    <name type="scientific">Neisseria meningitidis serogroup B (strain ATCC BAA-335 / MC58)</name>
    <dbReference type="NCBI Taxonomy" id="122586"/>
    <lineage>
        <taxon>Bacteria</taxon>
        <taxon>Pseudomonadati</taxon>
        <taxon>Pseudomonadota</taxon>
        <taxon>Betaproteobacteria</taxon>
        <taxon>Neisseriales</taxon>
        <taxon>Neisseriaceae</taxon>
        <taxon>Neisseria</taxon>
    </lineage>
</organism>